<feature type="signal peptide" evidence="5">
    <location>
        <begin position="1"/>
        <end position="25"/>
    </location>
</feature>
<feature type="chain" id="PRO_5003244448" description="Cytochrome P450 2C44">
    <location>
        <begin position="26"/>
        <end position="494"/>
    </location>
</feature>
<feature type="binding site" description="axial binding residue" evidence="3">
    <location>
        <position position="439"/>
    </location>
    <ligand>
        <name>heme</name>
        <dbReference type="ChEBI" id="CHEBI:30413"/>
    </ligand>
    <ligandPart>
        <name>Fe</name>
        <dbReference type="ChEBI" id="CHEBI:18248"/>
    </ligandPart>
</feature>
<feature type="modified residue" description="Phosphoserine" evidence="1">
    <location>
        <position position="131"/>
    </location>
</feature>
<feature type="modified residue" description="N6-acetyllysine" evidence="4">
    <location>
        <position position="253"/>
    </location>
</feature>
<feature type="modified residue" description="N6-acetyllysine" evidence="4">
    <location>
        <position position="379"/>
    </location>
</feature>
<feature type="splice variant" id="VSP_060520" description="In isoform 2.">
    <original>RSCVGEGLARMELFLFFTTI</original>
    <variation>YTRFGQLLASLNYVLRDPLM</variation>
    <location>
        <begin position="437"/>
        <end position="456"/>
    </location>
</feature>
<feature type="splice variant" id="VSP_060521" description="In isoform 2.">
    <location>
        <begin position="457"/>
        <end position="494"/>
    </location>
</feature>
<feature type="sequence conflict" description="In Ref. 3; AAH25819/AAH26766/AAH34834." evidence="10" ref="3">
    <original>L</original>
    <variation>F</variation>
    <location>
        <position position="51"/>
    </location>
</feature>
<feature type="sequence conflict" description="In Ref. 1; BAC34255." evidence="10" ref="1">
    <original>N</original>
    <variation>S</variation>
    <location>
        <position position="420"/>
    </location>
</feature>
<sequence length="494" mass="56422">MELLGLPTLALLVLVMSLSLLSVWTKMRTGGRLPPGPTPLPIIGNILQLDLKDIPASLSKLAKEYGPVYTLYFGSWPTVVLHGYDVVKEALLNQGDEFLGRGPLPIIEDSQKGHGIVFSEGERWKLLRRFSLMTLKNFGMGKRSLEERVQEEARCLVEELHKTEAQPFDPTFILACAPCNVICSILFNERFPYNDKTFLNLMDLLNKNFYQLNSIWIQMYNLWPTIMKYIPGKHREFSKRLGGVKNFILEKVKEHQESLDPANPRDYIDCFLSKIEEEKHNLKSDFNLENLAICGSNLFTAGTETTSTTLRFGLLLLVKHPEVQAKVHEELDRVIGRHQPPSMKDKMKLPYTDAVLHEIQRYITLLPSSLPHAVVQDTKFRHYVIPKGTAVFPFLSSILLDQKEFPNPEKFDPGHFLDKNGCFKKTDYFVPFSLGKRSCVGEGLARMELFLFFTTILQKFSLKALVEPKDLDIKPVTTGLFNLPPPYKLRLVPR</sequence>
<evidence type="ECO:0000250" key="1">
    <source>
        <dbReference type="UniProtKB" id="P00176"/>
    </source>
</evidence>
<evidence type="ECO:0000250" key="2">
    <source>
        <dbReference type="UniProtKB" id="P24470"/>
    </source>
</evidence>
<evidence type="ECO:0000250" key="3">
    <source>
        <dbReference type="UniProtKB" id="P33261"/>
    </source>
</evidence>
<evidence type="ECO:0000250" key="4">
    <source>
        <dbReference type="UniProtKB" id="Q64458"/>
    </source>
</evidence>
<evidence type="ECO:0000255" key="5"/>
<evidence type="ECO:0000269" key="6">
    <source>
    </source>
</evidence>
<evidence type="ECO:0000269" key="7">
    <source>
    </source>
</evidence>
<evidence type="ECO:0000269" key="8">
    <source>
    </source>
</evidence>
<evidence type="ECO:0000303" key="9">
    <source>
    </source>
</evidence>
<evidence type="ECO:0000305" key="10"/>
<evidence type="ECO:0000305" key="11">
    <source>
    </source>
</evidence>
<evidence type="ECO:0000312" key="12">
    <source>
        <dbReference type="MGI" id="MGI:1888897"/>
    </source>
</evidence>
<accession>E9Q5K4</accession>
<accession>Q6IEF7</accession>
<accession>Q8BWN7</accession>
<accession>Q8QZW4</accession>
<gene>
    <name evidence="12" type="primary">Cyp2c23</name>
    <name evidence="9" type="synonym">Cyp2c44</name>
</gene>
<keyword id="KW-0007">Acetylation</keyword>
<keyword id="KW-0025">Alternative splicing</keyword>
<keyword id="KW-0256">Endoplasmic reticulum</keyword>
<keyword id="KW-0276">Fatty acid metabolism</keyword>
<keyword id="KW-0349">Heme</keyword>
<keyword id="KW-0408">Iron</keyword>
<keyword id="KW-0443">Lipid metabolism</keyword>
<keyword id="KW-0472">Membrane</keyword>
<keyword id="KW-0479">Metal-binding</keyword>
<keyword id="KW-0492">Microsome</keyword>
<keyword id="KW-0503">Monooxygenase</keyword>
<keyword id="KW-0560">Oxidoreductase</keyword>
<keyword id="KW-0597">Phosphoprotein</keyword>
<keyword id="KW-1185">Reference proteome</keyword>
<keyword id="KW-0732">Signal</keyword>
<reference key="1">
    <citation type="journal article" date="2005" name="Science">
        <title>The transcriptional landscape of the mammalian genome.</title>
        <authorList>
            <person name="Carninci P."/>
            <person name="Kasukawa T."/>
            <person name="Katayama S."/>
            <person name="Gough J."/>
            <person name="Frith M.C."/>
            <person name="Maeda N."/>
            <person name="Oyama R."/>
            <person name="Ravasi T."/>
            <person name="Lenhard B."/>
            <person name="Wells C."/>
            <person name="Kodzius R."/>
            <person name="Shimokawa K."/>
            <person name="Bajic V.B."/>
            <person name="Brenner S.E."/>
            <person name="Batalov S."/>
            <person name="Forrest A.R."/>
            <person name="Zavolan M."/>
            <person name="Davis M.J."/>
            <person name="Wilming L.G."/>
            <person name="Aidinis V."/>
            <person name="Allen J.E."/>
            <person name="Ambesi-Impiombato A."/>
            <person name="Apweiler R."/>
            <person name="Aturaliya R.N."/>
            <person name="Bailey T.L."/>
            <person name="Bansal M."/>
            <person name="Baxter L."/>
            <person name="Beisel K.W."/>
            <person name="Bersano T."/>
            <person name="Bono H."/>
            <person name="Chalk A.M."/>
            <person name="Chiu K.P."/>
            <person name="Choudhary V."/>
            <person name="Christoffels A."/>
            <person name="Clutterbuck D.R."/>
            <person name="Crowe M.L."/>
            <person name="Dalla E."/>
            <person name="Dalrymple B.P."/>
            <person name="de Bono B."/>
            <person name="Della Gatta G."/>
            <person name="di Bernardo D."/>
            <person name="Down T."/>
            <person name="Engstrom P."/>
            <person name="Fagiolini M."/>
            <person name="Faulkner G."/>
            <person name="Fletcher C.F."/>
            <person name="Fukushima T."/>
            <person name="Furuno M."/>
            <person name="Futaki S."/>
            <person name="Gariboldi M."/>
            <person name="Georgii-Hemming P."/>
            <person name="Gingeras T.R."/>
            <person name="Gojobori T."/>
            <person name="Green R.E."/>
            <person name="Gustincich S."/>
            <person name="Harbers M."/>
            <person name="Hayashi Y."/>
            <person name="Hensch T.K."/>
            <person name="Hirokawa N."/>
            <person name="Hill D."/>
            <person name="Huminiecki L."/>
            <person name="Iacono M."/>
            <person name="Ikeo K."/>
            <person name="Iwama A."/>
            <person name="Ishikawa T."/>
            <person name="Jakt M."/>
            <person name="Kanapin A."/>
            <person name="Katoh M."/>
            <person name="Kawasawa Y."/>
            <person name="Kelso J."/>
            <person name="Kitamura H."/>
            <person name="Kitano H."/>
            <person name="Kollias G."/>
            <person name="Krishnan S.P."/>
            <person name="Kruger A."/>
            <person name="Kummerfeld S.K."/>
            <person name="Kurochkin I.V."/>
            <person name="Lareau L.F."/>
            <person name="Lazarevic D."/>
            <person name="Lipovich L."/>
            <person name="Liu J."/>
            <person name="Liuni S."/>
            <person name="McWilliam S."/>
            <person name="Madan Babu M."/>
            <person name="Madera M."/>
            <person name="Marchionni L."/>
            <person name="Matsuda H."/>
            <person name="Matsuzawa S."/>
            <person name="Miki H."/>
            <person name="Mignone F."/>
            <person name="Miyake S."/>
            <person name="Morris K."/>
            <person name="Mottagui-Tabar S."/>
            <person name="Mulder N."/>
            <person name="Nakano N."/>
            <person name="Nakauchi H."/>
            <person name="Ng P."/>
            <person name="Nilsson R."/>
            <person name="Nishiguchi S."/>
            <person name="Nishikawa S."/>
            <person name="Nori F."/>
            <person name="Ohara O."/>
            <person name="Okazaki Y."/>
            <person name="Orlando V."/>
            <person name="Pang K.C."/>
            <person name="Pavan W.J."/>
            <person name="Pavesi G."/>
            <person name="Pesole G."/>
            <person name="Petrovsky N."/>
            <person name="Piazza S."/>
            <person name="Reed J."/>
            <person name="Reid J.F."/>
            <person name="Ring B.Z."/>
            <person name="Ringwald M."/>
            <person name="Rost B."/>
            <person name="Ruan Y."/>
            <person name="Salzberg S.L."/>
            <person name="Sandelin A."/>
            <person name="Schneider C."/>
            <person name="Schoenbach C."/>
            <person name="Sekiguchi K."/>
            <person name="Semple C.A."/>
            <person name="Seno S."/>
            <person name="Sessa L."/>
            <person name="Sheng Y."/>
            <person name="Shibata Y."/>
            <person name="Shimada H."/>
            <person name="Shimada K."/>
            <person name="Silva D."/>
            <person name="Sinclair B."/>
            <person name="Sperling S."/>
            <person name="Stupka E."/>
            <person name="Sugiura K."/>
            <person name="Sultana R."/>
            <person name="Takenaka Y."/>
            <person name="Taki K."/>
            <person name="Tammoja K."/>
            <person name="Tan S.L."/>
            <person name="Tang S."/>
            <person name="Taylor M.S."/>
            <person name="Tegner J."/>
            <person name="Teichmann S.A."/>
            <person name="Ueda H.R."/>
            <person name="van Nimwegen E."/>
            <person name="Verardo R."/>
            <person name="Wei C.L."/>
            <person name="Yagi K."/>
            <person name="Yamanishi H."/>
            <person name="Zabarovsky E."/>
            <person name="Zhu S."/>
            <person name="Zimmer A."/>
            <person name="Hide W."/>
            <person name="Bult C."/>
            <person name="Grimmond S.M."/>
            <person name="Teasdale R.D."/>
            <person name="Liu E.T."/>
            <person name="Brusic V."/>
            <person name="Quackenbush J."/>
            <person name="Wahlestedt C."/>
            <person name="Mattick J.S."/>
            <person name="Hume D.A."/>
            <person name="Kai C."/>
            <person name="Sasaki D."/>
            <person name="Tomaru Y."/>
            <person name="Fukuda S."/>
            <person name="Kanamori-Katayama M."/>
            <person name="Suzuki M."/>
            <person name="Aoki J."/>
            <person name="Arakawa T."/>
            <person name="Iida J."/>
            <person name="Imamura K."/>
            <person name="Itoh M."/>
            <person name="Kato T."/>
            <person name="Kawaji H."/>
            <person name="Kawagashira N."/>
            <person name="Kawashima T."/>
            <person name="Kojima M."/>
            <person name="Kondo S."/>
            <person name="Konno H."/>
            <person name="Nakano K."/>
            <person name="Ninomiya N."/>
            <person name="Nishio T."/>
            <person name="Okada M."/>
            <person name="Plessy C."/>
            <person name="Shibata K."/>
            <person name="Shiraki T."/>
            <person name="Suzuki S."/>
            <person name="Tagami M."/>
            <person name="Waki K."/>
            <person name="Watahiki A."/>
            <person name="Okamura-Oho Y."/>
            <person name="Suzuki H."/>
            <person name="Kawai J."/>
            <person name="Hayashizaki Y."/>
        </authorList>
    </citation>
    <scope>NUCLEOTIDE SEQUENCE [LARGE SCALE MRNA] (ISOFORM 2)</scope>
</reference>
<reference key="2">
    <citation type="journal article" date="2009" name="PLoS Biol.">
        <title>Lineage-specific biology revealed by a finished genome assembly of the mouse.</title>
        <authorList>
            <person name="Church D.M."/>
            <person name="Goodstadt L."/>
            <person name="Hillier L.W."/>
            <person name="Zody M.C."/>
            <person name="Goldstein S."/>
            <person name="She X."/>
            <person name="Bult C.J."/>
            <person name="Agarwala R."/>
            <person name="Cherry J.L."/>
            <person name="DiCuccio M."/>
            <person name="Hlavina W."/>
            <person name="Kapustin Y."/>
            <person name="Meric P."/>
            <person name="Maglott D."/>
            <person name="Birtle Z."/>
            <person name="Marques A.C."/>
            <person name="Graves T."/>
            <person name="Zhou S."/>
            <person name="Teague B."/>
            <person name="Potamousis K."/>
            <person name="Churas C."/>
            <person name="Place M."/>
            <person name="Herschleb J."/>
            <person name="Runnheim R."/>
            <person name="Forrest D."/>
            <person name="Amos-Landgraf J."/>
            <person name="Schwartz D.C."/>
            <person name="Cheng Z."/>
            <person name="Lindblad-Toh K."/>
            <person name="Eichler E.E."/>
            <person name="Ponting C.P."/>
        </authorList>
    </citation>
    <scope>NUCLEOTIDE SEQUENCE [LARGE SCALE GENOMIC DNA] (ISOFORMS 1 AND 2)</scope>
    <source>
        <strain>C57BL/6J</strain>
    </source>
</reference>
<reference key="3">
    <citation type="journal article" date="2004" name="Genome Res.">
        <title>The status, quality, and expansion of the NIH full-length cDNA project: the Mammalian Gene Collection (MGC).</title>
        <authorList>
            <consortium name="The MGC Project Team"/>
        </authorList>
    </citation>
    <scope>NUCLEOTIDE SEQUENCE [LARGE SCALE MRNA] (ISOFORM 1)</scope>
    <source>
        <strain>FVB/N</strain>
        <tissue>Liver</tissue>
    </source>
</reference>
<reference key="4">
    <citation type="journal article" date="2004" name="J. Pharmacol. Exp. Ther.">
        <title>CYP2C44, a new murine CYP2C that metabolizes arachidonic acid to unique stereospecific products.</title>
        <authorList>
            <person name="DeLozier T.C."/>
            <person name="Tsao C.C."/>
            <person name="Coulter S.J."/>
            <person name="Foley J."/>
            <person name="Bradbury J.A."/>
            <person name="Zeldin D.C."/>
            <person name="Goldstein J.A."/>
        </authorList>
    </citation>
    <scope>IDENTIFICATION</scope>
    <scope>TISSUE SPECIFICITY</scope>
    <scope>SUBCELLULAR LOCATION</scope>
    <scope>FUNCTION</scope>
    <scope>CATALYTIC ACTIVITY</scope>
    <scope>PATHWAY</scope>
    <source>
        <strain>C57B16/J</strain>
    </source>
</reference>
<reference key="5">
    <citation type="journal article" date="2010" name="Cell">
        <title>A tissue-specific atlas of mouse protein phosphorylation and expression.</title>
        <authorList>
            <person name="Huttlin E.L."/>
            <person name="Jedrychowski M.P."/>
            <person name="Elias J.E."/>
            <person name="Goswami T."/>
            <person name="Rad R."/>
            <person name="Beausoleil S.A."/>
            <person name="Villen J."/>
            <person name="Haas W."/>
            <person name="Sowa M.E."/>
            <person name="Gygi S.P."/>
        </authorList>
    </citation>
    <scope>IDENTIFICATION BY MASS SPECTROMETRY [LARGE SCALE ANALYSIS]</scope>
</reference>
<reference key="6">
    <citation type="journal article" date="2014" name="Am. J. Physiol.">
        <title>Cyp2c44 epoxygenase in the collecting duct is essential for the high K+ intake-induced antihypertensive effect.</title>
        <authorList>
            <person name="Wang W.H."/>
            <person name="Zhang C."/>
            <person name="Lin D.H."/>
            <person name="Wang L."/>
            <person name="Graves J.P."/>
            <person name="Zeldin D.C."/>
            <person name="Capdevila J.H."/>
        </authorList>
    </citation>
    <scope>DISRUPTION PHENOTYPE</scope>
    <scope>FUNCTION</scope>
    <scope>TISSUE SPECIFICITY</scope>
    <scope>INDUCTION BY HIGH SODIUM AND POTASSIUM INTAKE</scope>
</reference>
<reference key="7">
    <citation type="journal article" date="2014" name="J. Biol. Chem.">
        <title>The Cyp2c44 epoxygenase regulates epithelial sodium channel activity and the blood pressure responses to increased dietary salt.</title>
        <authorList>
            <person name="Capdevila J.H."/>
            <person name="Pidkovka N."/>
            <person name="Mei S."/>
            <person name="Gong Y."/>
            <person name="Falck J.R."/>
            <person name="Imig J.D."/>
            <person name="Harris R.C."/>
            <person name="Wang W."/>
        </authorList>
    </citation>
    <scope>DISRUPTION PHENOTYPE</scope>
    <scope>FUNCTION</scope>
</reference>
<comment type="function">
    <text evidence="2 6 7 8">A cytochrome P450 monooxygenase involved in polyunsaturated fatty acids (PUFAs) metabolism and signaling (PubMed:15084647). Catalyzes preferentially the epoxidation of double bonds of PUFAs (PubMed:15084647). Converts arachidonic acid (ARA, C20:4(n-6)) primarily to stereospecific products 8R,9S-epoxyeicosatrienoate (EET) and 11R,12S-EET (PubMed:15084647). Plays a major role in the formation of EETs and hydroxy-EETs (HEETs) in kidney. Via EETs may inhibit the epithelial sodium channels (ENaCs) in nephron segments, preventing excessive sodium absorption during high dietary salt intake (PubMed:24368771, PubMed:24966089). Participates in the formation of anti-inflammatory hydroxyepoxyeicosatrienoic acids (HEETs) by converting 20-hydroxyeicosatetraenoic acid (20-HETE) to 20,8,9-HEET, an activator of PPARA (By similarity). Metabolizes eicosapentaenoic acid (EPA, C20:5(n-3)) to epoxyeicosatetraenoic acid (EETeTr) regioisomers, 8,9-, 11,12-, 14,15-, and 17,18- EETeTr, preferentially producing 17R,18S enantiomer (By similarity). Mechanistically, uses molecular oxygen inserting one oxygen atom into a substrate, and reducing the second into a water molecule, with two electrons provided by NADPH via cytochrome P450 reductase (CPR; NADPH-ferrihemoprotein reductase) (PubMed:15084647).</text>
</comment>
<comment type="catalytic activity">
    <reaction evidence="6">
        <text>(5Z,8Z,11Z,14Z)-eicosatetraenoate + reduced [NADPH--hemoprotein reductase] + O2 = (8R,9S)-epoxy-(5Z,11Z,14Z)-eicosatrienoate + oxidized [NADPH--hemoprotein reductase] + H2O + H(+)</text>
        <dbReference type="Rhea" id="RHEA:49884"/>
        <dbReference type="Rhea" id="RHEA-COMP:11964"/>
        <dbReference type="Rhea" id="RHEA-COMP:11965"/>
        <dbReference type="ChEBI" id="CHEBI:15377"/>
        <dbReference type="ChEBI" id="CHEBI:15378"/>
        <dbReference type="ChEBI" id="CHEBI:15379"/>
        <dbReference type="ChEBI" id="CHEBI:32395"/>
        <dbReference type="ChEBI" id="CHEBI:57618"/>
        <dbReference type="ChEBI" id="CHEBI:58210"/>
        <dbReference type="ChEBI" id="CHEBI:131975"/>
    </reaction>
    <physiologicalReaction direction="left-to-right" evidence="11">
        <dbReference type="Rhea" id="RHEA:49885"/>
    </physiologicalReaction>
</comment>
<comment type="catalytic activity">
    <reaction evidence="6">
        <text>(5Z,8Z,11Z,14Z)-eicosatetraenoate + reduced [NADPH--hemoprotein reductase] + O2 = (11R,12S)-epoxy-(5Z,8Z,14Z)-eicosatrienoate + oxidized [NADPH--hemoprotein reductase] + H2O + H(+)</text>
        <dbReference type="Rhea" id="RHEA:49880"/>
        <dbReference type="Rhea" id="RHEA-COMP:11964"/>
        <dbReference type="Rhea" id="RHEA-COMP:11965"/>
        <dbReference type="ChEBI" id="CHEBI:15377"/>
        <dbReference type="ChEBI" id="CHEBI:15378"/>
        <dbReference type="ChEBI" id="CHEBI:15379"/>
        <dbReference type="ChEBI" id="CHEBI:32395"/>
        <dbReference type="ChEBI" id="CHEBI:57618"/>
        <dbReference type="ChEBI" id="CHEBI:58210"/>
        <dbReference type="ChEBI" id="CHEBI:131970"/>
    </reaction>
    <physiologicalReaction direction="left-to-right" evidence="11">
        <dbReference type="Rhea" id="RHEA:49881"/>
    </physiologicalReaction>
</comment>
<comment type="catalytic activity">
    <reaction evidence="6">
        <text>(5Z,8Z,11Z,14Z)-eicosatetraenoate + reduced [NADPH--hemoprotein reductase] + O2 = 14,15-epoxy-(5Z,8Z,11Z)-eicosatrienoate + oxidized [NADPH--hemoprotein reductase] + H2O + H(+)</text>
        <dbReference type="Rhea" id="RHEA:51472"/>
        <dbReference type="Rhea" id="RHEA-COMP:11964"/>
        <dbReference type="Rhea" id="RHEA-COMP:11965"/>
        <dbReference type="ChEBI" id="CHEBI:15377"/>
        <dbReference type="ChEBI" id="CHEBI:15378"/>
        <dbReference type="ChEBI" id="CHEBI:15379"/>
        <dbReference type="ChEBI" id="CHEBI:32395"/>
        <dbReference type="ChEBI" id="CHEBI:57618"/>
        <dbReference type="ChEBI" id="CHEBI:58210"/>
        <dbReference type="ChEBI" id="CHEBI:84024"/>
    </reaction>
    <physiologicalReaction direction="left-to-right" evidence="11">
        <dbReference type="Rhea" id="RHEA:51473"/>
    </physiologicalReaction>
</comment>
<comment type="catalytic activity">
    <reaction evidence="2">
        <text>(5Z,8Z,11Z,14Z,17Z)-eicosapentaenoate + reduced [NADPH--hemoprotein reductase] + O2 = 8,9-epoxy-(5Z,11Z,14Z,17Z)-eicosatetraenoate + oxidized [NADPH--hemoprotein reductase] + H2O + H(+)</text>
        <dbReference type="Rhea" id="RHEA:52168"/>
        <dbReference type="Rhea" id="RHEA-COMP:11964"/>
        <dbReference type="Rhea" id="RHEA-COMP:11965"/>
        <dbReference type="ChEBI" id="CHEBI:15377"/>
        <dbReference type="ChEBI" id="CHEBI:15378"/>
        <dbReference type="ChEBI" id="CHEBI:15379"/>
        <dbReference type="ChEBI" id="CHEBI:57618"/>
        <dbReference type="ChEBI" id="CHEBI:58210"/>
        <dbReference type="ChEBI" id="CHEBI:58562"/>
        <dbReference type="ChEBI" id="CHEBI:136439"/>
    </reaction>
    <physiologicalReaction direction="left-to-right" evidence="2">
        <dbReference type="Rhea" id="RHEA:52169"/>
    </physiologicalReaction>
</comment>
<comment type="catalytic activity">
    <reaction evidence="2">
        <text>(5Z,8Z,11Z,14Z,17Z)-eicosapentaenoate + reduced [NADPH--hemoprotein reductase] + O2 = 11,12-epoxy-(5Z,8Z,14Z,17Z)-eicosatetraenoate + oxidized [NADPH--hemoprotein reductase] + H2O + H(+)</text>
        <dbReference type="Rhea" id="RHEA:52172"/>
        <dbReference type="Rhea" id="RHEA-COMP:11964"/>
        <dbReference type="Rhea" id="RHEA-COMP:11965"/>
        <dbReference type="ChEBI" id="CHEBI:15377"/>
        <dbReference type="ChEBI" id="CHEBI:15378"/>
        <dbReference type="ChEBI" id="CHEBI:15379"/>
        <dbReference type="ChEBI" id="CHEBI:57618"/>
        <dbReference type="ChEBI" id="CHEBI:58210"/>
        <dbReference type="ChEBI" id="CHEBI:58562"/>
        <dbReference type="ChEBI" id="CHEBI:136441"/>
    </reaction>
    <physiologicalReaction direction="left-to-right" evidence="2">
        <dbReference type="Rhea" id="RHEA:52173"/>
    </physiologicalReaction>
</comment>
<comment type="catalytic activity">
    <reaction evidence="2">
        <text>(5Z,8Z,11Z,14Z,17Z)-eicosapentaenoate + reduced [NADPH--hemoprotein reductase] + O2 = 14,15-epoxy-(5Z,8Z,11Z,17Z)-eicosatetraenoate + oxidized [NADPH--hemoprotein reductase] + H2O + H(+)</text>
        <dbReference type="Rhea" id="RHEA:52176"/>
        <dbReference type="Rhea" id="RHEA-COMP:11964"/>
        <dbReference type="Rhea" id="RHEA-COMP:11965"/>
        <dbReference type="ChEBI" id="CHEBI:15377"/>
        <dbReference type="ChEBI" id="CHEBI:15378"/>
        <dbReference type="ChEBI" id="CHEBI:15379"/>
        <dbReference type="ChEBI" id="CHEBI:57618"/>
        <dbReference type="ChEBI" id="CHEBI:58210"/>
        <dbReference type="ChEBI" id="CHEBI:58562"/>
        <dbReference type="ChEBI" id="CHEBI:136443"/>
    </reaction>
    <physiologicalReaction direction="left-to-right" evidence="2">
        <dbReference type="Rhea" id="RHEA:52177"/>
    </physiologicalReaction>
</comment>
<comment type="catalytic activity">
    <reaction evidence="2">
        <text>(5Z,8Z,11Z,14Z,17Z)-eicosapentaenoate + reduced [NADPH--hemoprotein reductase] + O2 = (17R,18S)-epoxy-(5Z,8Z,11Z,14Z)-eicosatetraenoate + oxidized [NADPH--hemoprotein reductase] + H2O + H(+)</text>
        <dbReference type="Rhea" id="RHEA:39779"/>
        <dbReference type="Rhea" id="RHEA-COMP:11964"/>
        <dbReference type="Rhea" id="RHEA-COMP:11965"/>
        <dbReference type="ChEBI" id="CHEBI:15377"/>
        <dbReference type="ChEBI" id="CHEBI:15378"/>
        <dbReference type="ChEBI" id="CHEBI:15379"/>
        <dbReference type="ChEBI" id="CHEBI:57618"/>
        <dbReference type="ChEBI" id="CHEBI:58210"/>
        <dbReference type="ChEBI" id="CHEBI:58562"/>
        <dbReference type="ChEBI" id="CHEBI:76634"/>
    </reaction>
    <physiologicalReaction direction="left-to-right" evidence="2">
        <dbReference type="Rhea" id="RHEA:39780"/>
    </physiologicalReaction>
</comment>
<comment type="catalytic activity">
    <reaction evidence="2">
        <text>(5Z,8Z,11Z,14Z,17Z)-eicosapentaenoate + reduced [NADPH--hemoprotein reductase] + O2 = (17S,18R)-epoxy-(5Z,8Z,11Z,14Z)-eicosatetraenoate + oxidized [NADPH--hemoprotein reductase] + H2O + H(+)</text>
        <dbReference type="Rhea" id="RHEA:39783"/>
        <dbReference type="Rhea" id="RHEA-COMP:11964"/>
        <dbReference type="Rhea" id="RHEA-COMP:11965"/>
        <dbReference type="ChEBI" id="CHEBI:15377"/>
        <dbReference type="ChEBI" id="CHEBI:15378"/>
        <dbReference type="ChEBI" id="CHEBI:15379"/>
        <dbReference type="ChEBI" id="CHEBI:57618"/>
        <dbReference type="ChEBI" id="CHEBI:58210"/>
        <dbReference type="ChEBI" id="CHEBI:58562"/>
        <dbReference type="ChEBI" id="CHEBI:76635"/>
    </reaction>
    <physiologicalReaction direction="left-to-right" evidence="2">
        <dbReference type="Rhea" id="RHEA:39784"/>
    </physiologicalReaction>
</comment>
<comment type="catalytic activity">
    <reaction evidence="2">
        <text>20-hydroxy-(5Z,8Z,11Z,14Z)-eicosatetraenoate + reduced [NADPH--hemoprotein reductase] + O2 = 20-hydroxy-8,9-epoxy-(5Z,11Z,14Z)-eicosatrienoate + oxidized [NADPH--hemoprotein reductase] + H2O + H(+)</text>
        <dbReference type="Rhea" id="RHEA:64980"/>
        <dbReference type="Rhea" id="RHEA-COMP:11964"/>
        <dbReference type="Rhea" id="RHEA-COMP:11965"/>
        <dbReference type="ChEBI" id="CHEBI:15377"/>
        <dbReference type="ChEBI" id="CHEBI:15378"/>
        <dbReference type="ChEBI" id="CHEBI:15379"/>
        <dbReference type="ChEBI" id="CHEBI:57618"/>
        <dbReference type="ChEBI" id="CHEBI:58210"/>
        <dbReference type="ChEBI" id="CHEBI:76624"/>
        <dbReference type="ChEBI" id="CHEBI:137474"/>
    </reaction>
    <physiologicalReaction direction="left-to-right" evidence="2">
        <dbReference type="Rhea" id="RHEA:64981"/>
    </physiologicalReaction>
</comment>
<comment type="cofactor">
    <cofactor evidence="3">
        <name>heme</name>
        <dbReference type="ChEBI" id="CHEBI:30413"/>
    </cofactor>
</comment>
<comment type="pathway">
    <text evidence="11">Lipid metabolism; arachidonate metabolism.</text>
</comment>
<comment type="subcellular location">
    <subcellularLocation>
        <location evidence="6">Endoplasmic reticulum membrane</location>
    </subcellularLocation>
    <subcellularLocation>
        <location evidence="6">Microsome membrane</location>
    </subcellularLocation>
</comment>
<comment type="alternative products">
    <event type="alternative splicing"/>
    <isoform>
        <id>E9Q5K4-1</id>
        <name>1</name>
        <sequence type="displayed"/>
    </isoform>
    <isoform>
        <id>E9Q5K4-2</id>
        <name>2</name>
        <sequence type="described" ref="VSP_060520 VSP_060521"/>
    </isoform>
</comment>
<comment type="tissue specificity">
    <text evidence="6 8">Highly expressed in liver, particularly in hepatocytes and bile duct epithelial cells (at protein level) (PubMed:24966089). Expressed in nephron segments (PubMed:15084647, PubMed:24966089). Prominent expression is detected in proximal tubules at the corticomedullary junction (at protein level) (PubMed:15084647). Also expressed in renal cortical collecting duct (PubMed:15084647). Lower expression levels are detected in adrenal glands (PubMed:15084647).</text>
</comment>
<comment type="induction">
    <text evidence="8">Up-regulated by high sodium or high potassium diets. High sodium intake increases expression in thick ascending limb and distal convoluted tubule. An increase in dietary potassium intake induces expression in distal convoluted tubule and cortical collecting duct.</text>
</comment>
<comment type="disruption phenotype">
    <text evidence="7 8">Mutant mice have normal development and lack symptoms of disease or organ malformation (PubMed:24368771). Become hypertensive in response to high sodium or high potassium diets (PubMed:24368771, PubMed:24966089).</text>
</comment>
<comment type="similarity">
    <text evidence="10">Belongs to the cytochrome P450 family.</text>
</comment>
<protein>
    <recommendedName>
        <fullName>Cytochrome P450 2C44</fullName>
        <ecNumber evidence="6">1.14.14.-</ecNumber>
    </recommendedName>
    <alternativeName>
        <fullName>Arachidonic acid epoxygenase</fullName>
    </alternativeName>
</protein>
<name>CP2CN_MOUSE</name>
<proteinExistence type="evidence at protein level"/>
<organism>
    <name type="scientific">Mus musculus</name>
    <name type="common">Mouse</name>
    <dbReference type="NCBI Taxonomy" id="10090"/>
    <lineage>
        <taxon>Eukaryota</taxon>
        <taxon>Metazoa</taxon>
        <taxon>Chordata</taxon>
        <taxon>Craniata</taxon>
        <taxon>Vertebrata</taxon>
        <taxon>Euteleostomi</taxon>
        <taxon>Mammalia</taxon>
        <taxon>Eutheria</taxon>
        <taxon>Euarchontoglires</taxon>
        <taxon>Glires</taxon>
        <taxon>Rodentia</taxon>
        <taxon>Myomorpha</taxon>
        <taxon>Muroidea</taxon>
        <taxon>Muridae</taxon>
        <taxon>Murinae</taxon>
        <taxon>Mus</taxon>
        <taxon>Mus</taxon>
    </lineage>
</organism>
<dbReference type="EC" id="1.14.14.-" evidence="6"/>
<dbReference type="EMBL" id="AK050436">
    <property type="protein sequence ID" value="BAC34255.1"/>
    <property type="molecule type" value="mRNA"/>
</dbReference>
<dbReference type="EMBL" id="AC124693">
    <property type="status" value="NOT_ANNOTATED_CDS"/>
    <property type="molecule type" value="Genomic_DNA"/>
</dbReference>
<dbReference type="EMBL" id="BC025819">
    <property type="protein sequence ID" value="AAH25819.1"/>
    <property type="molecule type" value="mRNA"/>
</dbReference>
<dbReference type="EMBL" id="BC026766">
    <property type="protein sequence ID" value="AAH26766.1"/>
    <property type="molecule type" value="mRNA"/>
</dbReference>
<dbReference type="EMBL" id="BC034834">
    <property type="protein sequence ID" value="AAH34834.1"/>
    <property type="molecule type" value="mRNA"/>
</dbReference>
<dbReference type="EMBL" id="BK005218">
    <property type="protein sequence ID" value="DAA05332.1"/>
    <property type="molecule type" value="mRNA"/>
</dbReference>
<dbReference type="CCDS" id="CCDS29841.1">
    <molecule id="E9Q5K4-1"/>
</dbReference>
<dbReference type="CCDS" id="CCDS84445.1">
    <molecule id="E9Q5K4-2"/>
</dbReference>
<dbReference type="RefSeq" id="NP_001001446.3">
    <molecule id="E9Q5K4-1"/>
    <property type="nucleotide sequence ID" value="NM_001001446.3"/>
</dbReference>
<dbReference type="RefSeq" id="NP_001161377.1">
    <molecule id="E9Q5K4-2"/>
    <property type="nucleotide sequence ID" value="NM_001167905.1"/>
</dbReference>
<dbReference type="SMR" id="E9Q5K4"/>
<dbReference type="FunCoup" id="E9Q5K4">
    <property type="interactions" value="1189"/>
</dbReference>
<dbReference type="STRING" id="10090.ENSMUSP00000026211"/>
<dbReference type="SwissLipids" id="SLP:000001667"/>
<dbReference type="GlyGen" id="E9Q5K4">
    <property type="glycosylation" value="1 site"/>
</dbReference>
<dbReference type="iPTMnet" id="E9Q5K4"/>
<dbReference type="PhosphoSitePlus" id="E9Q5K4"/>
<dbReference type="jPOST" id="E9Q5K4"/>
<dbReference type="PaxDb" id="10090-ENSMUSP00000026211"/>
<dbReference type="PeptideAtlas" id="E9Q5K4"/>
<dbReference type="ProteomicsDB" id="305707">
    <molecule id="E9Q5K4-1"/>
</dbReference>
<dbReference type="DNASU" id="226143"/>
<dbReference type="Ensembl" id="ENSMUST00000026211.10">
    <molecule id="E9Q5K4-1"/>
    <property type="protein sequence ID" value="ENSMUSP00000026211.9"/>
    <property type="gene ID" value="ENSMUSG00000025197.10"/>
</dbReference>
<dbReference type="Ensembl" id="ENSMUST00000211830.2">
    <molecule id="E9Q5K4-2"/>
    <property type="protein sequence ID" value="ENSMUSP00000148377.2"/>
    <property type="gene ID" value="ENSMUSG00000025197.10"/>
</dbReference>
<dbReference type="GeneID" id="226143"/>
<dbReference type="KEGG" id="mmu:226143"/>
<dbReference type="UCSC" id="uc008hpc.2">
    <molecule id="E9Q5K4-1"/>
    <property type="organism name" value="mouse"/>
</dbReference>
<dbReference type="AGR" id="MGI:1888897"/>
<dbReference type="CTD" id="226143"/>
<dbReference type="MGI" id="MGI:1888897">
    <property type="gene designation" value="Cyp2c23"/>
</dbReference>
<dbReference type="VEuPathDB" id="HostDB:ENSMUSG00000025197"/>
<dbReference type="eggNOG" id="KOG0156">
    <property type="taxonomic scope" value="Eukaryota"/>
</dbReference>
<dbReference type="GeneTree" id="ENSGT00940000163402"/>
<dbReference type="HOGENOM" id="CLU_001570_22_3_1"/>
<dbReference type="InParanoid" id="E9Q5K4"/>
<dbReference type="OMA" id="HMAYNGR"/>
<dbReference type="OrthoDB" id="2789670at2759"/>
<dbReference type="PhylomeDB" id="E9Q5K4"/>
<dbReference type="TreeFam" id="TF352043"/>
<dbReference type="UniPathway" id="UPA00383"/>
<dbReference type="BioGRID-ORCS" id="226143">
    <property type="hits" value="3 hits in 79 CRISPR screens"/>
</dbReference>
<dbReference type="ChiTaRS" id="Cyp2c23">
    <property type="organism name" value="mouse"/>
</dbReference>
<dbReference type="PRO" id="PR:E9Q5K4"/>
<dbReference type="Proteomes" id="UP000000589">
    <property type="component" value="Chromosome 19"/>
</dbReference>
<dbReference type="RNAct" id="E9Q5K4">
    <property type="molecule type" value="protein"/>
</dbReference>
<dbReference type="Bgee" id="ENSMUSG00000025197">
    <property type="expression patterns" value="Expressed in left lobe of liver and 47 other cell types or tissues"/>
</dbReference>
<dbReference type="GO" id="GO:0005789">
    <property type="term" value="C:endoplasmic reticulum membrane"/>
    <property type="evidence" value="ECO:0007669"/>
    <property type="project" value="UniProtKB-SubCell"/>
</dbReference>
<dbReference type="GO" id="GO:0008404">
    <property type="term" value="F:arachidonate 14,15-epoxygenase activity"/>
    <property type="evidence" value="ECO:0007669"/>
    <property type="project" value="RHEA"/>
</dbReference>
<dbReference type="GO" id="GO:0020037">
    <property type="term" value="F:heme binding"/>
    <property type="evidence" value="ECO:0007669"/>
    <property type="project" value="InterPro"/>
</dbReference>
<dbReference type="GO" id="GO:0005506">
    <property type="term" value="F:iron ion binding"/>
    <property type="evidence" value="ECO:0007669"/>
    <property type="project" value="InterPro"/>
</dbReference>
<dbReference type="GO" id="GO:0016712">
    <property type="term" value="F:oxidoreductase activity, acting on paired donors, with incorporation or reduction of molecular oxygen, reduced flavin or flavoprotein as one donor, and incorporation of one atom of oxygen"/>
    <property type="evidence" value="ECO:0007669"/>
    <property type="project" value="InterPro"/>
</dbReference>
<dbReference type="GO" id="GO:0019369">
    <property type="term" value="P:arachidonate metabolic process"/>
    <property type="evidence" value="ECO:0007669"/>
    <property type="project" value="UniProtKB-UniPathway"/>
</dbReference>
<dbReference type="CDD" id="cd20665">
    <property type="entry name" value="CYP2C-like"/>
    <property type="match status" value="1"/>
</dbReference>
<dbReference type="FunFam" id="1.10.630.10:FF:000001">
    <property type="entry name" value="Cytochrome P450, family 2"/>
    <property type="match status" value="1"/>
</dbReference>
<dbReference type="Gene3D" id="1.10.630.10">
    <property type="entry name" value="Cytochrome P450"/>
    <property type="match status" value="1"/>
</dbReference>
<dbReference type="InterPro" id="IPR001128">
    <property type="entry name" value="Cyt_P450"/>
</dbReference>
<dbReference type="InterPro" id="IPR017972">
    <property type="entry name" value="Cyt_P450_CS"/>
</dbReference>
<dbReference type="InterPro" id="IPR002401">
    <property type="entry name" value="Cyt_P450_E_grp-I"/>
</dbReference>
<dbReference type="InterPro" id="IPR008067">
    <property type="entry name" value="Cyt_P450_E_grp-I_CYP2A-like"/>
</dbReference>
<dbReference type="InterPro" id="IPR036396">
    <property type="entry name" value="Cyt_P450_sf"/>
</dbReference>
<dbReference type="InterPro" id="IPR050182">
    <property type="entry name" value="Cytochrome_P450_fam2"/>
</dbReference>
<dbReference type="PANTHER" id="PTHR24300:SF346">
    <property type="entry name" value="CYTOCHROME P450 2C44"/>
    <property type="match status" value="1"/>
</dbReference>
<dbReference type="PANTHER" id="PTHR24300">
    <property type="entry name" value="CYTOCHROME P450 508A4-RELATED"/>
    <property type="match status" value="1"/>
</dbReference>
<dbReference type="Pfam" id="PF00067">
    <property type="entry name" value="p450"/>
    <property type="match status" value="1"/>
</dbReference>
<dbReference type="PRINTS" id="PR00463">
    <property type="entry name" value="EP450I"/>
</dbReference>
<dbReference type="PRINTS" id="PR01684">
    <property type="entry name" value="EP450ICYP2A"/>
</dbReference>
<dbReference type="PRINTS" id="PR00385">
    <property type="entry name" value="P450"/>
</dbReference>
<dbReference type="SUPFAM" id="SSF48264">
    <property type="entry name" value="Cytochrome P450"/>
    <property type="match status" value="1"/>
</dbReference>
<dbReference type="PROSITE" id="PS00086">
    <property type="entry name" value="CYTOCHROME_P450"/>
    <property type="match status" value="1"/>
</dbReference>